<accession>Q96LQ0</accession>
<accession>Q6NTH6</accession>
<organism>
    <name type="scientific">Homo sapiens</name>
    <name type="common">Human</name>
    <dbReference type="NCBI Taxonomy" id="9606"/>
    <lineage>
        <taxon>Eukaryota</taxon>
        <taxon>Metazoa</taxon>
        <taxon>Chordata</taxon>
        <taxon>Craniata</taxon>
        <taxon>Vertebrata</taxon>
        <taxon>Euteleostomi</taxon>
        <taxon>Mammalia</taxon>
        <taxon>Eutheria</taxon>
        <taxon>Euarchontoglires</taxon>
        <taxon>Primates</taxon>
        <taxon>Haplorrhini</taxon>
        <taxon>Catarrhini</taxon>
        <taxon>Hominidae</taxon>
        <taxon>Homo</taxon>
    </lineage>
</organism>
<evidence type="ECO:0000269" key="1">
    <source>
    </source>
</evidence>
<evidence type="ECO:0000269" key="2">
    <source>
    </source>
</evidence>
<protein>
    <recommendedName>
        <fullName>Protein phosphatase 1 regulatory subunit 36</fullName>
    </recommendedName>
</protein>
<reference key="1">
    <citation type="journal article" date="2004" name="Nat. Genet.">
        <title>Complete sequencing and characterization of 21,243 full-length human cDNAs.</title>
        <authorList>
            <person name="Ota T."/>
            <person name="Suzuki Y."/>
            <person name="Nishikawa T."/>
            <person name="Otsuki T."/>
            <person name="Sugiyama T."/>
            <person name="Irie R."/>
            <person name="Wakamatsu A."/>
            <person name="Hayashi K."/>
            <person name="Sato H."/>
            <person name="Nagai K."/>
            <person name="Kimura K."/>
            <person name="Makita H."/>
            <person name="Sekine M."/>
            <person name="Obayashi M."/>
            <person name="Nishi T."/>
            <person name="Shibahara T."/>
            <person name="Tanaka T."/>
            <person name="Ishii S."/>
            <person name="Yamamoto J."/>
            <person name="Saito K."/>
            <person name="Kawai Y."/>
            <person name="Isono Y."/>
            <person name="Nakamura Y."/>
            <person name="Nagahari K."/>
            <person name="Murakami K."/>
            <person name="Yasuda T."/>
            <person name="Iwayanagi T."/>
            <person name="Wagatsuma M."/>
            <person name="Shiratori A."/>
            <person name="Sudo H."/>
            <person name="Hosoiri T."/>
            <person name="Kaku Y."/>
            <person name="Kodaira H."/>
            <person name="Kondo H."/>
            <person name="Sugawara M."/>
            <person name="Takahashi M."/>
            <person name="Kanda K."/>
            <person name="Yokoi T."/>
            <person name="Furuya T."/>
            <person name="Kikkawa E."/>
            <person name="Omura Y."/>
            <person name="Abe K."/>
            <person name="Kamihara K."/>
            <person name="Katsuta N."/>
            <person name="Sato K."/>
            <person name="Tanikawa M."/>
            <person name="Yamazaki M."/>
            <person name="Ninomiya K."/>
            <person name="Ishibashi T."/>
            <person name="Yamashita H."/>
            <person name="Murakawa K."/>
            <person name="Fujimori K."/>
            <person name="Tanai H."/>
            <person name="Kimata M."/>
            <person name="Watanabe M."/>
            <person name="Hiraoka S."/>
            <person name="Chiba Y."/>
            <person name="Ishida S."/>
            <person name="Ono Y."/>
            <person name="Takiguchi S."/>
            <person name="Watanabe S."/>
            <person name="Yosida M."/>
            <person name="Hotuta T."/>
            <person name="Kusano J."/>
            <person name="Kanehori K."/>
            <person name="Takahashi-Fujii A."/>
            <person name="Hara H."/>
            <person name="Tanase T.-O."/>
            <person name="Nomura Y."/>
            <person name="Togiya S."/>
            <person name="Komai F."/>
            <person name="Hara R."/>
            <person name="Takeuchi K."/>
            <person name="Arita M."/>
            <person name="Imose N."/>
            <person name="Musashino K."/>
            <person name="Yuuki H."/>
            <person name="Oshima A."/>
            <person name="Sasaki N."/>
            <person name="Aotsuka S."/>
            <person name="Yoshikawa Y."/>
            <person name="Matsunawa H."/>
            <person name="Ichihara T."/>
            <person name="Shiohata N."/>
            <person name="Sano S."/>
            <person name="Moriya S."/>
            <person name="Momiyama H."/>
            <person name="Satoh N."/>
            <person name="Takami S."/>
            <person name="Terashima Y."/>
            <person name="Suzuki O."/>
            <person name="Nakagawa S."/>
            <person name="Senoh A."/>
            <person name="Mizoguchi H."/>
            <person name="Goto Y."/>
            <person name="Shimizu F."/>
            <person name="Wakebe H."/>
            <person name="Hishigaki H."/>
            <person name="Watanabe T."/>
            <person name="Sugiyama A."/>
            <person name="Takemoto M."/>
            <person name="Kawakami B."/>
            <person name="Yamazaki M."/>
            <person name="Watanabe K."/>
            <person name="Kumagai A."/>
            <person name="Itakura S."/>
            <person name="Fukuzumi Y."/>
            <person name="Fujimori Y."/>
            <person name="Komiyama M."/>
            <person name="Tashiro H."/>
            <person name="Tanigami A."/>
            <person name="Fujiwara T."/>
            <person name="Ono T."/>
            <person name="Yamada K."/>
            <person name="Fujii Y."/>
            <person name="Ozaki K."/>
            <person name="Hirao M."/>
            <person name="Ohmori Y."/>
            <person name="Kawabata A."/>
            <person name="Hikiji T."/>
            <person name="Kobatake N."/>
            <person name="Inagaki H."/>
            <person name="Ikema Y."/>
            <person name="Okamoto S."/>
            <person name="Okitani R."/>
            <person name="Kawakami T."/>
            <person name="Noguchi S."/>
            <person name="Itoh T."/>
            <person name="Shigeta K."/>
            <person name="Senba T."/>
            <person name="Matsumura K."/>
            <person name="Nakajima Y."/>
            <person name="Mizuno T."/>
            <person name="Morinaga M."/>
            <person name="Sasaki M."/>
            <person name="Togashi T."/>
            <person name="Oyama M."/>
            <person name="Hata H."/>
            <person name="Watanabe M."/>
            <person name="Komatsu T."/>
            <person name="Mizushima-Sugano J."/>
            <person name="Satoh T."/>
            <person name="Shirai Y."/>
            <person name="Takahashi Y."/>
            <person name="Nakagawa K."/>
            <person name="Okumura K."/>
            <person name="Nagase T."/>
            <person name="Nomura N."/>
            <person name="Kikuchi H."/>
            <person name="Masuho Y."/>
            <person name="Yamashita R."/>
            <person name="Nakai K."/>
            <person name="Yada T."/>
            <person name="Nakamura Y."/>
            <person name="Ohara O."/>
            <person name="Isogai T."/>
            <person name="Sugano S."/>
        </authorList>
    </citation>
    <scope>NUCLEOTIDE SEQUENCE [LARGE SCALE MRNA]</scope>
    <source>
        <tissue>Testis</tissue>
    </source>
</reference>
<reference key="2">
    <citation type="journal article" date="2004" name="Genome Res.">
        <title>The status, quality, and expansion of the NIH full-length cDNA project: the Mammalian Gene Collection (MGC).</title>
        <authorList>
            <consortium name="The MGC Project Team"/>
        </authorList>
    </citation>
    <scope>NUCLEOTIDE SEQUENCE [LARGE SCALE MRNA]</scope>
    <scope>VARIANT ILE-83</scope>
    <source>
        <tissue>Testis</tissue>
    </source>
</reference>
<reference key="3">
    <citation type="journal article" date="2009" name="Chem. Biol.">
        <title>Docking motif-guided mapping of the interactome of protein phosphatase-1.</title>
        <authorList>
            <person name="Hendrickx A."/>
            <person name="Beullens M."/>
            <person name="Ceulemans H."/>
            <person name="Den Abt T."/>
            <person name="Van Eynde A."/>
            <person name="Nicolaescu E."/>
            <person name="Lesage B."/>
            <person name="Bollen M."/>
        </authorList>
    </citation>
    <scope>FUNCTION</scope>
    <scope>INTERACTION WITH PPP1CA</scope>
</reference>
<proteinExistence type="evidence at protein level"/>
<dbReference type="EMBL" id="AK058044">
    <property type="protein sequence ID" value="BAB71637.1"/>
    <property type="molecule type" value="mRNA"/>
</dbReference>
<dbReference type="EMBL" id="BC068989">
    <property type="protein sequence ID" value="AAH68989.1"/>
    <property type="molecule type" value="mRNA"/>
</dbReference>
<dbReference type="CCDS" id="CCDS9767.1"/>
<dbReference type="RefSeq" id="NP_758953.1">
    <property type="nucleotide sequence ID" value="NM_172365.3"/>
</dbReference>
<dbReference type="BioGRID" id="126908">
    <property type="interactions" value="3"/>
</dbReference>
<dbReference type="FunCoup" id="Q96LQ0">
    <property type="interactions" value="2"/>
</dbReference>
<dbReference type="IntAct" id="Q96LQ0">
    <property type="interactions" value="2"/>
</dbReference>
<dbReference type="STRING" id="9606.ENSP00000298705"/>
<dbReference type="GlyGen" id="Q96LQ0">
    <property type="glycosylation" value="1 site, 1 O-linked glycan (1 site)"/>
</dbReference>
<dbReference type="iPTMnet" id="Q96LQ0"/>
<dbReference type="PhosphoSitePlus" id="Q96LQ0"/>
<dbReference type="BioMuta" id="PPP1R36"/>
<dbReference type="DMDM" id="71153015"/>
<dbReference type="MassIVE" id="Q96LQ0"/>
<dbReference type="PaxDb" id="9606-ENSP00000298705"/>
<dbReference type="PeptideAtlas" id="Q96LQ0"/>
<dbReference type="ProteomicsDB" id="77235"/>
<dbReference type="Antibodypedia" id="51345">
    <property type="antibodies" value="107 antibodies from 20 providers"/>
</dbReference>
<dbReference type="DNASU" id="145376"/>
<dbReference type="Ensembl" id="ENST00000298705.6">
    <property type="protein sequence ID" value="ENSP00000298705.1"/>
    <property type="gene ID" value="ENSG00000165807.8"/>
</dbReference>
<dbReference type="GeneID" id="145376"/>
<dbReference type="KEGG" id="hsa:145376"/>
<dbReference type="MANE-Select" id="ENST00000298705.6">
    <property type="protein sequence ID" value="ENSP00000298705.1"/>
    <property type="RefSeq nucleotide sequence ID" value="NM_172365.3"/>
    <property type="RefSeq protein sequence ID" value="NP_758953.1"/>
</dbReference>
<dbReference type="UCSC" id="uc001xhl.1">
    <property type="organism name" value="human"/>
</dbReference>
<dbReference type="AGR" id="HGNC:20097"/>
<dbReference type="CTD" id="145376"/>
<dbReference type="DisGeNET" id="145376"/>
<dbReference type="GeneCards" id="PPP1R36"/>
<dbReference type="HGNC" id="HGNC:20097">
    <property type="gene designation" value="PPP1R36"/>
</dbReference>
<dbReference type="HPA" id="ENSG00000165807">
    <property type="expression patterns" value="Tissue enhanced (fallopian tube, testis)"/>
</dbReference>
<dbReference type="MIM" id="619923">
    <property type="type" value="gene"/>
</dbReference>
<dbReference type="neXtProt" id="NX_Q96LQ0"/>
<dbReference type="OpenTargets" id="ENSG00000165807"/>
<dbReference type="PharmGKB" id="PA134955014"/>
<dbReference type="VEuPathDB" id="HostDB:ENSG00000165807"/>
<dbReference type="eggNOG" id="ENOG502RH2T">
    <property type="taxonomic scope" value="Eukaryota"/>
</dbReference>
<dbReference type="GeneTree" id="ENSGT00390000012412"/>
<dbReference type="HOGENOM" id="CLU_053706_0_0_1"/>
<dbReference type="InParanoid" id="Q96LQ0"/>
<dbReference type="OMA" id="PAQMQEH"/>
<dbReference type="OrthoDB" id="6724830at2759"/>
<dbReference type="PAN-GO" id="Q96LQ0">
    <property type="GO annotations" value="0 GO annotations based on evolutionary models"/>
</dbReference>
<dbReference type="PhylomeDB" id="Q96LQ0"/>
<dbReference type="TreeFam" id="TF329463"/>
<dbReference type="PathwayCommons" id="Q96LQ0"/>
<dbReference type="SignaLink" id="Q96LQ0"/>
<dbReference type="BioGRID-ORCS" id="145376">
    <property type="hits" value="12 hits in 1148 CRISPR screens"/>
</dbReference>
<dbReference type="ChiTaRS" id="PPP1R36">
    <property type="organism name" value="human"/>
</dbReference>
<dbReference type="GenomeRNAi" id="145376"/>
<dbReference type="Pharos" id="Q96LQ0">
    <property type="development level" value="Tdark"/>
</dbReference>
<dbReference type="PRO" id="PR:Q96LQ0"/>
<dbReference type="Proteomes" id="UP000005640">
    <property type="component" value="Chromosome 14"/>
</dbReference>
<dbReference type="RNAct" id="Q96LQ0">
    <property type="molecule type" value="protein"/>
</dbReference>
<dbReference type="Bgee" id="ENSG00000165807">
    <property type="expression patterns" value="Expressed in sperm and 138 other cell types or tissues"/>
</dbReference>
<dbReference type="ExpressionAtlas" id="Q96LQ0">
    <property type="expression patterns" value="baseline and differential"/>
</dbReference>
<dbReference type="GO" id="GO:0019902">
    <property type="term" value="F:phosphatase binding"/>
    <property type="evidence" value="ECO:0007669"/>
    <property type="project" value="InterPro"/>
</dbReference>
<dbReference type="GO" id="GO:0004864">
    <property type="term" value="F:protein phosphatase inhibitor activity"/>
    <property type="evidence" value="ECO:0007669"/>
    <property type="project" value="UniProtKB-KW"/>
</dbReference>
<dbReference type="InterPro" id="IPR026142">
    <property type="entry name" value="Pro_pase_1_reg_su_36"/>
</dbReference>
<dbReference type="PANTHER" id="PTHR21055">
    <property type="entry name" value="PROTEIN PHOSPHATASE 1 REGULATORY SUBUNIT 36"/>
    <property type="match status" value="1"/>
</dbReference>
<dbReference type="PANTHER" id="PTHR21055:SF3">
    <property type="entry name" value="PROTEIN PHOSPHATASE 1 REGULATORY SUBUNIT 36"/>
    <property type="match status" value="1"/>
</dbReference>
<dbReference type="Pfam" id="PF14895">
    <property type="entry name" value="PPPI_inhib"/>
    <property type="match status" value="1"/>
</dbReference>
<name>PPR36_HUMAN</name>
<feature type="chain" id="PRO_0000089893" description="Protein phosphatase 1 regulatory subunit 36">
    <location>
        <begin position="1"/>
        <end position="422"/>
    </location>
</feature>
<feature type="sequence variant" id="VAR_022999" description="In dbSNP:rs6573560." evidence="1">
    <original>T</original>
    <variation>I</variation>
    <location>
        <position position="83"/>
    </location>
</feature>
<feature type="sequence variant" id="VAR_061612" description="In dbSNP:rs45482504.">
    <original>F</original>
    <variation>L</variation>
    <location>
        <position position="267"/>
    </location>
</feature>
<sequence>MYRVPEFYARRKRLGGQTPYLMDQLGLRLGMWYWKDETRTLEFRRFAAEDSVQWLLKHHPHFTPAAEVKEKGKKGKAVHFAETDGPASDRLTDKRLAAKDDKSAKAVEKRGQQGTITLDDVKFVTLLLLQDTEMQRICSFTTFMRNKNLDNFLMALLYYLSHYLEKNSLEKKPKSYMVGLVEKKEMELVLSELEAAQRYLAQKYCILVLGLAVPDKHHMCCGKEKISDTQKDWKFFESFYTFCTYVAWIVFRRQHLTEIEEEVGRLFRTNMFNIPRRRREDEESGGEKKRMTFVQFRRMMAKRPAIKKAINMRSPVMSTLLPSLREKAQNVFEKKYHQVDVRFPAEMQKHVGTLDSVPMPVVGILGEPRCLFNPHTLHPLDPEENTKSFGRYPSLMENNNMRIQDTLDLVMKTLSSHTSCPK</sequence>
<gene>
    <name type="primary">PPP1R36</name>
    <name type="synonym">C14orf50</name>
</gene>
<comment type="function">
    <text evidence="2">Inhibits phosphatase activity of protein phosphatase 1 (PP1) complexes.</text>
</comment>
<comment type="subunit">
    <text evidence="2">Interacts with PPP1CA.</text>
</comment>
<keyword id="KW-0650">Protein phosphatase inhibitor</keyword>
<keyword id="KW-1267">Proteomics identification</keyword>
<keyword id="KW-1185">Reference proteome</keyword>